<keyword id="KW-0413">Isomerase</keyword>
<keyword id="KW-0819">tRNA processing</keyword>
<comment type="function">
    <text evidence="1">Responsible for synthesis of pseudouridine from uracil-55 in the psi GC loop of transfer RNAs.</text>
</comment>
<comment type="catalytic activity">
    <reaction evidence="1">
        <text>uridine(55) in tRNA = pseudouridine(55) in tRNA</text>
        <dbReference type="Rhea" id="RHEA:42532"/>
        <dbReference type="Rhea" id="RHEA-COMP:10101"/>
        <dbReference type="Rhea" id="RHEA-COMP:10102"/>
        <dbReference type="ChEBI" id="CHEBI:65314"/>
        <dbReference type="ChEBI" id="CHEBI:65315"/>
        <dbReference type="EC" id="5.4.99.25"/>
    </reaction>
</comment>
<comment type="similarity">
    <text evidence="1">Belongs to the pseudouridine synthase TruB family. Type 1 subfamily.</text>
</comment>
<dbReference type="EC" id="5.4.99.25" evidence="1"/>
<dbReference type="EMBL" id="CP000056">
    <property type="protein sequence ID" value="AAX72047.1"/>
    <property type="molecule type" value="Genomic_DNA"/>
</dbReference>
<dbReference type="RefSeq" id="WP_011284826.1">
    <property type="nucleotide sequence ID" value="NC_007296.2"/>
</dbReference>
<dbReference type="SMR" id="Q48TB3"/>
<dbReference type="KEGG" id="spb:M28_Spy0934"/>
<dbReference type="HOGENOM" id="CLU_032087_0_1_9"/>
<dbReference type="GO" id="GO:0003723">
    <property type="term" value="F:RNA binding"/>
    <property type="evidence" value="ECO:0007669"/>
    <property type="project" value="InterPro"/>
</dbReference>
<dbReference type="GO" id="GO:0160148">
    <property type="term" value="F:tRNA pseudouridine(55) synthase activity"/>
    <property type="evidence" value="ECO:0007669"/>
    <property type="project" value="UniProtKB-EC"/>
</dbReference>
<dbReference type="GO" id="GO:1990481">
    <property type="term" value="P:mRNA pseudouridine synthesis"/>
    <property type="evidence" value="ECO:0007669"/>
    <property type="project" value="TreeGrafter"/>
</dbReference>
<dbReference type="GO" id="GO:0031119">
    <property type="term" value="P:tRNA pseudouridine synthesis"/>
    <property type="evidence" value="ECO:0007669"/>
    <property type="project" value="UniProtKB-UniRule"/>
</dbReference>
<dbReference type="CDD" id="cd02573">
    <property type="entry name" value="PseudoU_synth_EcTruB"/>
    <property type="match status" value="1"/>
</dbReference>
<dbReference type="FunFam" id="3.30.2350.10:FF:000011">
    <property type="entry name" value="tRNA pseudouridine synthase B"/>
    <property type="match status" value="1"/>
</dbReference>
<dbReference type="Gene3D" id="3.30.2350.10">
    <property type="entry name" value="Pseudouridine synthase"/>
    <property type="match status" value="1"/>
</dbReference>
<dbReference type="HAMAP" id="MF_01080">
    <property type="entry name" value="TruB_bact"/>
    <property type="match status" value="1"/>
</dbReference>
<dbReference type="InterPro" id="IPR020103">
    <property type="entry name" value="PsdUridine_synth_cat_dom_sf"/>
</dbReference>
<dbReference type="InterPro" id="IPR002501">
    <property type="entry name" value="PsdUridine_synth_N"/>
</dbReference>
<dbReference type="InterPro" id="IPR014780">
    <property type="entry name" value="tRNA_psdUridine_synth_TruB"/>
</dbReference>
<dbReference type="InterPro" id="IPR032819">
    <property type="entry name" value="TruB_C"/>
</dbReference>
<dbReference type="NCBIfam" id="TIGR00431">
    <property type="entry name" value="TruB"/>
    <property type="match status" value="1"/>
</dbReference>
<dbReference type="PANTHER" id="PTHR13767:SF2">
    <property type="entry name" value="PSEUDOURIDYLATE SYNTHASE TRUB1"/>
    <property type="match status" value="1"/>
</dbReference>
<dbReference type="PANTHER" id="PTHR13767">
    <property type="entry name" value="TRNA-PSEUDOURIDINE SYNTHASE"/>
    <property type="match status" value="1"/>
</dbReference>
<dbReference type="Pfam" id="PF16198">
    <property type="entry name" value="TruB_C_2"/>
    <property type="match status" value="1"/>
</dbReference>
<dbReference type="Pfam" id="PF01509">
    <property type="entry name" value="TruB_N"/>
    <property type="match status" value="1"/>
</dbReference>
<dbReference type="SUPFAM" id="SSF55120">
    <property type="entry name" value="Pseudouridine synthase"/>
    <property type="match status" value="1"/>
</dbReference>
<gene>
    <name evidence="1" type="primary">truB</name>
    <name type="ordered locus">M28_Spy0934</name>
</gene>
<proteinExistence type="inferred from homology"/>
<reference key="1">
    <citation type="journal article" date="2005" name="J. Infect. Dis.">
        <title>Genome sequence of a serotype M28 strain of group A Streptococcus: potential new insights into puerperal sepsis and bacterial disease specificity.</title>
        <authorList>
            <person name="Green N.M."/>
            <person name="Zhang S."/>
            <person name="Porcella S.F."/>
            <person name="Nagiec M.J."/>
            <person name="Barbian K.D."/>
            <person name="Beres S.B."/>
            <person name="Lefebvre R.B."/>
            <person name="Musser J.M."/>
        </authorList>
    </citation>
    <scope>NUCLEOTIDE SEQUENCE [LARGE SCALE GENOMIC DNA]</scope>
    <source>
        <strain>MGAS6180</strain>
    </source>
</reference>
<evidence type="ECO:0000255" key="1">
    <source>
        <dbReference type="HAMAP-Rule" id="MF_01080"/>
    </source>
</evidence>
<name>TRUB_STRPM</name>
<protein>
    <recommendedName>
        <fullName evidence="1">tRNA pseudouridine synthase B</fullName>
        <ecNumber evidence="1">5.4.99.25</ecNumber>
    </recommendedName>
    <alternativeName>
        <fullName evidence="1">tRNA pseudouridine(55) synthase</fullName>
        <shortName evidence="1">Psi55 synthase</shortName>
    </alternativeName>
    <alternativeName>
        <fullName evidence="1">tRNA pseudouridylate synthase</fullName>
    </alternativeName>
    <alternativeName>
        <fullName evidence="1">tRNA-uridine isomerase</fullName>
    </alternativeName>
</protein>
<sequence>MINGIINLKKEAGMTSHDAVFKLRKLLQEKKIGHGGTLDPDVVGVLPIAVGKATRVIEYMTEAGKVYEGQVTLGYSTTTEDASGEVVARSSLPAVLTEELVDQTMTTFLGKITQTPPMYSAVKVNGRKLYEYARTGESVERPRREVTISLFERTSPLNFTEDGLCRFSFKVACSKGTYVRTLAVDLGRALWVESHMSFLQRSASAGLTLETAYTLGEIADMVSKQEMSFLLPIEYGVADLPKMVIDDTELTEISFGRRLSLPSQEPLLAAFHGEKVIAILEKRDQEYKPKKVLI</sequence>
<feature type="chain" id="PRO_0000229388" description="tRNA pseudouridine synthase B">
    <location>
        <begin position="1"/>
        <end position="294"/>
    </location>
</feature>
<feature type="active site" description="Nucleophile" evidence="1">
    <location>
        <position position="39"/>
    </location>
</feature>
<accession>Q48TB3</accession>
<organism>
    <name type="scientific">Streptococcus pyogenes serotype M28 (strain MGAS6180)</name>
    <dbReference type="NCBI Taxonomy" id="319701"/>
    <lineage>
        <taxon>Bacteria</taxon>
        <taxon>Bacillati</taxon>
        <taxon>Bacillota</taxon>
        <taxon>Bacilli</taxon>
        <taxon>Lactobacillales</taxon>
        <taxon>Streptococcaceae</taxon>
        <taxon>Streptococcus</taxon>
    </lineage>
</organism>